<comment type="function">
    <text evidence="1">NAD-dependent lysine deacetylase and desuccinylase that specifically removes acetyl and succinyl groups on target proteins. Modulates the activities of several proteins which are inactive in their acylated form.</text>
</comment>
<comment type="catalytic activity">
    <reaction evidence="1">
        <text>N(6)-acetyl-L-lysyl-[protein] + NAD(+) + H2O = 2''-O-acetyl-ADP-D-ribose + nicotinamide + L-lysyl-[protein]</text>
        <dbReference type="Rhea" id="RHEA:43636"/>
        <dbReference type="Rhea" id="RHEA-COMP:9752"/>
        <dbReference type="Rhea" id="RHEA-COMP:10731"/>
        <dbReference type="ChEBI" id="CHEBI:15377"/>
        <dbReference type="ChEBI" id="CHEBI:17154"/>
        <dbReference type="ChEBI" id="CHEBI:29969"/>
        <dbReference type="ChEBI" id="CHEBI:57540"/>
        <dbReference type="ChEBI" id="CHEBI:61930"/>
        <dbReference type="ChEBI" id="CHEBI:83767"/>
        <dbReference type="EC" id="2.3.1.286"/>
    </reaction>
</comment>
<comment type="catalytic activity">
    <reaction evidence="1">
        <text>N(6)-succinyl-L-lysyl-[protein] + NAD(+) + H2O = 2''-O-succinyl-ADP-D-ribose + nicotinamide + L-lysyl-[protein]</text>
        <dbReference type="Rhea" id="RHEA:47668"/>
        <dbReference type="Rhea" id="RHEA-COMP:9752"/>
        <dbReference type="Rhea" id="RHEA-COMP:11877"/>
        <dbReference type="ChEBI" id="CHEBI:15377"/>
        <dbReference type="ChEBI" id="CHEBI:17154"/>
        <dbReference type="ChEBI" id="CHEBI:29969"/>
        <dbReference type="ChEBI" id="CHEBI:57540"/>
        <dbReference type="ChEBI" id="CHEBI:87830"/>
        <dbReference type="ChEBI" id="CHEBI:87832"/>
    </reaction>
</comment>
<comment type="cofactor">
    <cofactor evidence="1">
        <name>Zn(2+)</name>
        <dbReference type="ChEBI" id="CHEBI:29105"/>
    </cofactor>
    <text evidence="1">Binds 1 zinc ion per subunit.</text>
</comment>
<comment type="subcellular location">
    <subcellularLocation>
        <location evidence="1">Cytoplasm</location>
    </subcellularLocation>
</comment>
<comment type="domain">
    <text evidence="1">2 residues (Tyr-53 and Arg-56) present in a large hydrophobic pocket are probably involved in substrate specificity. They are important for desuccinylation activity, but dispensable for deacetylation activity.</text>
</comment>
<comment type="similarity">
    <text evidence="1">Belongs to the sirtuin family. Class III subfamily.</text>
</comment>
<feature type="chain" id="PRO_0000110329" description="NAD-dependent protein deacylase">
    <location>
        <begin position="1"/>
        <end position="237"/>
    </location>
</feature>
<feature type="domain" description="Deacetylase sirtuin-type" evidence="2">
    <location>
        <begin position="1"/>
        <end position="235"/>
    </location>
</feature>
<feature type="active site" description="Proton acceptor" evidence="2">
    <location>
        <position position="104"/>
    </location>
</feature>
<feature type="binding site" evidence="1">
    <location>
        <begin position="8"/>
        <end position="28"/>
    </location>
    <ligand>
        <name>NAD(+)</name>
        <dbReference type="ChEBI" id="CHEBI:57540"/>
    </ligand>
</feature>
<feature type="binding site" evidence="1">
    <location>
        <position position="53"/>
    </location>
    <ligand>
        <name>substrate</name>
    </ligand>
</feature>
<feature type="binding site" evidence="1">
    <location>
        <position position="56"/>
    </location>
    <ligand>
        <name>substrate</name>
    </ligand>
</feature>
<feature type="binding site" evidence="1">
    <location>
        <begin position="86"/>
        <end position="89"/>
    </location>
    <ligand>
        <name>NAD(+)</name>
        <dbReference type="ChEBI" id="CHEBI:57540"/>
    </ligand>
</feature>
<feature type="binding site" evidence="1">
    <location>
        <position position="112"/>
    </location>
    <ligand>
        <name>Zn(2+)</name>
        <dbReference type="ChEBI" id="CHEBI:29105"/>
    </ligand>
</feature>
<feature type="binding site" evidence="1">
    <location>
        <position position="115"/>
    </location>
    <ligand>
        <name>Zn(2+)</name>
        <dbReference type="ChEBI" id="CHEBI:29105"/>
    </ligand>
</feature>
<feature type="binding site" evidence="1">
    <location>
        <position position="138"/>
    </location>
    <ligand>
        <name>Zn(2+)</name>
        <dbReference type="ChEBI" id="CHEBI:29105"/>
    </ligand>
</feature>
<feature type="binding site" evidence="1">
    <location>
        <position position="140"/>
    </location>
    <ligand>
        <name>Zn(2+)</name>
        <dbReference type="ChEBI" id="CHEBI:29105"/>
    </ligand>
</feature>
<feature type="binding site" evidence="1">
    <location>
        <begin position="177"/>
        <end position="179"/>
    </location>
    <ligand>
        <name>NAD(+)</name>
        <dbReference type="ChEBI" id="CHEBI:57540"/>
    </ligand>
</feature>
<feature type="binding site" evidence="1">
    <location>
        <begin position="203"/>
        <end position="205"/>
    </location>
    <ligand>
        <name>NAD(+)</name>
        <dbReference type="ChEBI" id="CHEBI:57540"/>
    </ligand>
</feature>
<feature type="binding site" evidence="1">
    <location>
        <position position="221"/>
    </location>
    <ligand>
        <name>NAD(+)</name>
        <dbReference type="ChEBI" id="CHEBI:57540"/>
    </ligand>
</feature>
<protein>
    <recommendedName>
        <fullName evidence="1">NAD-dependent protein deacylase</fullName>
        <ecNumber evidence="1 2">2.3.1.286</ecNumber>
    </recommendedName>
    <alternativeName>
        <fullName evidence="1">Regulatory protein SIR2 homolog</fullName>
    </alternativeName>
</protein>
<dbReference type="EC" id="2.3.1.286" evidence="1 2"/>
<dbReference type="EMBL" id="AL583922">
    <property type="protein sequence ID" value="CAC30462.1"/>
    <property type="molecule type" value="Genomic_DNA"/>
</dbReference>
<dbReference type="PIR" id="A87098">
    <property type="entry name" value="A87098"/>
</dbReference>
<dbReference type="RefSeq" id="NP_302058.1">
    <property type="nucleotide sequence ID" value="NC_002677.1"/>
</dbReference>
<dbReference type="RefSeq" id="WP_010908379.1">
    <property type="nucleotide sequence ID" value="NC_002677.1"/>
</dbReference>
<dbReference type="SMR" id="Q9CBW6"/>
<dbReference type="STRING" id="272631.gene:17575352"/>
<dbReference type="KEGG" id="mle:ML1511"/>
<dbReference type="PATRIC" id="fig|272631.5.peg.2839"/>
<dbReference type="Leproma" id="ML1511"/>
<dbReference type="eggNOG" id="COG0846">
    <property type="taxonomic scope" value="Bacteria"/>
</dbReference>
<dbReference type="HOGENOM" id="CLU_023643_3_1_11"/>
<dbReference type="OrthoDB" id="9800582at2"/>
<dbReference type="Proteomes" id="UP000000806">
    <property type="component" value="Chromosome"/>
</dbReference>
<dbReference type="GO" id="GO:0005737">
    <property type="term" value="C:cytoplasm"/>
    <property type="evidence" value="ECO:0007669"/>
    <property type="project" value="UniProtKB-SubCell"/>
</dbReference>
<dbReference type="GO" id="GO:0017136">
    <property type="term" value="F:histone deacetylase activity, NAD-dependent"/>
    <property type="evidence" value="ECO:0007669"/>
    <property type="project" value="TreeGrafter"/>
</dbReference>
<dbReference type="GO" id="GO:0070403">
    <property type="term" value="F:NAD+ binding"/>
    <property type="evidence" value="ECO:0007669"/>
    <property type="project" value="UniProtKB-UniRule"/>
</dbReference>
<dbReference type="GO" id="GO:0036054">
    <property type="term" value="F:protein-malonyllysine demalonylase activity"/>
    <property type="evidence" value="ECO:0007669"/>
    <property type="project" value="InterPro"/>
</dbReference>
<dbReference type="GO" id="GO:0036055">
    <property type="term" value="F:protein-succinyllysine desuccinylase activity"/>
    <property type="evidence" value="ECO:0007669"/>
    <property type="project" value="UniProtKB-UniRule"/>
</dbReference>
<dbReference type="GO" id="GO:0008270">
    <property type="term" value="F:zinc ion binding"/>
    <property type="evidence" value="ECO:0007669"/>
    <property type="project" value="UniProtKB-UniRule"/>
</dbReference>
<dbReference type="CDD" id="cd01412">
    <property type="entry name" value="SIRT5_Af1_CobB"/>
    <property type="match status" value="1"/>
</dbReference>
<dbReference type="Gene3D" id="3.30.1600.10">
    <property type="entry name" value="SIR2/SIRT2 'Small Domain"/>
    <property type="match status" value="1"/>
</dbReference>
<dbReference type="Gene3D" id="3.40.50.1220">
    <property type="entry name" value="TPP-binding domain"/>
    <property type="match status" value="1"/>
</dbReference>
<dbReference type="HAMAP" id="MF_01121">
    <property type="entry name" value="Sirtuin_ClassIII"/>
    <property type="match status" value="1"/>
</dbReference>
<dbReference type="InterPro" id="IPR029035">
    <property type="entry name" value="DHS-like_NAD/FAD-binding_dom"/>
</dbReference>
<dbReference type="InterPro" id="IPR050134">
    <property type="entry name" value="NAD-dep_sirtuin_deacylases"/>
</dbReference>
<dbReference type="InterPro" id="IPR003000">
    <property type="entry name" value="Sirtuin"/>
</dbReference>
<dbReference type="InterPro" id="IPR026591">
    <property type="entry name" value="Sirtuin_cat_small_dom_sf"/>
</dbReference>
<dbReference type="InterPro" id="IPR027546">
    <property type="entry name" value="Sirtuin_class_III"/>
</dbReference>
<dbReference type="InterPro" id="IPR026590">
    <property type="entry name" value="Ssirtuin_cat_dom"/>
</dbReference>
<dbReference type="NCBIfam" id="NF001753">
    <property type="entry name" value="PRK00481.1-3"/>
    <property type="match status" value="1"/>
</dbReference>
<dbReference type="PANTHER" id="PTHR11085:SF4">
    <property type="entry name" value="NAD-DEPENDENT PROTEIN DEACYLASE"/>
    <property type="match status" value="1"/>
</dbReference>
<dbReference type="PANTHER" id="PTHR11085">
    <property type="entry name" value="NAD-DEPENDENT PROTEIN DEACYLASE SIRTUIN-5, MITOCHONDRIAL-RELATED"/>
    <property type="match status" value="1"/>
</dbReference>
<dbReference type="Pfam" id="PF02146">
    <property type="entry name" value="SIR2"/>
    <property type="match status" value="1"/>
</dbReference>
<dbReference type="SUPFAM" id="SSF52467">
    <property type="entry name" value="DHS-like NAD/FAD-binding domain"/>
    <property type="match status" value="1"/>
</dbReference>
<dbReference type="PROSITE" id="PS50305">
    <property type="entry name" value="SIRTUIN"/>
    <property type="match status" value="1"/>
</dbReference>
<name>NPD_MYCLE</name>
<sequence>MRVVVLSGAGISAESDVPTFRDDKNGLWARFDPYQLSSTQGWQRNPERVWGWYLWRHYLVANVKPNDGHRAIAAWQEQIEVSVITQNVDDLHERAGSTPVHHLHGSLFKFHCARCNVAYTGALPDMPEPVLEVDPPVCYCGGLIRPAIVWFGEPLPDEPWRRAVEATETTDVMVVVGTSAIVYPAAGLPELALSRGAVVIEVNPEPTPLTKNATISIRETASQALPGLLQRLPALLK</sequence>
<accession>Q9CBW6</accession>
<gene>
    <name evidence="1" type="primary">cobB</name>
    <name type="ordered locus">ML1511</name>
</gene>
<keyword id="KW-0963">Cytoplasm</keyword>
<keyword id="KW-0479">Metal-binding</keyword>
<keyword id="KW-0520">NAD</keyword>
<keyword id="KW-1185">Reference proteome</keyword>
<keyword id="KW-0808">Transferase</keyword>
<keyword id="KW-0862">Zinc</keyword>
<reference key="1">
    <citation type="journal article" date="2001" name="Nature">
        <title>Massive gene decay in the leprosy bacillus.</title>
        <authorList>
            <person name="Cole S.T."/>
            <person name="Eiglmeier K."/>
            <person name="Parkhill J."/>
            <person name="James K.D."/>
            <person name="Thomson N.R."/>
            <person name="Wheeler P.R."/>
            <person name="Honore N."/>
            <person name="Garnier T."/>
            <person name="Churcher C.M."/>
            <person name="Harris D.E."/>
            <person name="Mungall K.L."/>
            <person name="Basham D."/>
            <person name="Brown D."/>
            <person name="Chillingworth T."/>
            <person name="Connor R."/>
            <person name="Davies R.M."/>
            <person name="Devlin K."/>
            <person name="Duthoy S."/>
            <person name="Feltwell T."/>
            <person name="Fraser A."/>
            <person name="Hamlin N."/>
            <person name="Holroyd S."/>
            <person name="Hornsby T."/>
            <person name="Jagels K."/>
            <person name="Lacroix C."/>
            <person name="Maclean J."/>
            <person name="Moule S."/>
            <person name="Murphy L.D."/>
            <person name="Oliver K."/>
            <person name="Quail M.A."/>
            <person name="Rajandream M.A."/>
            <person name="Rutherford K.M."/>
            <person name="Rutter S."/>
            <person name="Seeger K."/>
            <person name="Simon S."/>
            <person name="Simmonds M."/>
            <person name="Skelton J."/>
            <person name="Squares R."/>
            <person name="Squares S."/>
            <person name="Stevens K."/>
            <person name="Taylor K."/>
            <person name="Whitehead S."/>
            <person name="Woodward J.R."/>
            <person name="Barrell B.G."/>
        </authorList>
    </citation>
    <scope>NUCLEOTIDE SEQUENCE [LARGE SCALE GENOMIC DNA]</scope>
    <source>
        <strain>TN</strain>
    </source>
</reference>
<organism>
    <name type="scientific">Mycobacterium leprae (strain TN)</name>
    <dbReference type="NCBI Taxonomy" id="272631"/>
    <lineage>
        <taxon>Bacteria</taxon>
        <taxon>Bacillati</taxon>
        <taxon>Actinomycetota</taxon>
        <taxon>Actinomycetes</taxon>
        <taxon>Mycobacteriales</taxon>
        <taxon>Mycobacteriaceae</taxon>
        <taxon>Mycobacterium</taxon>
    </lineage>
</organism>
<evidence type="ECO:0000255" key="1">
    <source>
        <dbReference type="HAMAP-Rule" id="MF_01121"/>
    </source>
</evidence>
<evidence type="ECO:0000255" key="2">
    <source>
        <dbReference type="PROSITE-ProRule" id="PRU00236"/>
    </source>
</evidence>
<proteinExistence type="inferred from homology"/>